<dbReference type="EMBL" id="L42023">
    <property type="protein sequence ID" value="AAC21748.1"/>
    <property type="molecule type" value="Genomic_DNA"/>
</dbReference>
<dbReference type="PIR" id="H64046">
    <property type="entry name" value="H64046"/>
</dbReference>
<dbReference type="RefSeq" id="NP_438243.1">
    <property type="nucleotide sequence ID" value="NC_000907.1"/>
</dbReference>
<dbReference type="SMR" id="P44496"/>
<dbReference type="STRING" id="71421.HI_0070"/>
<dbReference type="EnsemblBacteria" id="AAC21748">
    <property type="protein sequence ID" value="AAC21748"/>
    <property type="gene ID" value="HI_0070"/>
</dbReference>
<dbReference type="KEGG" id="hin:HI_0070"/>
<dbReference type="PATRIC" id="fig|71421.8.peg.71"/>
<dbReference type="eggNOG" id="COG0497">
    <property type="taxonomic scope" value="Bacteria"/>
</dbReference>
<dbReference type="HOGENOM" id="CLU_018297_3_1_6"/>
<dbReference type="OrthoDB" id="9806954at2"/>
<dbReference type="PhylomeDB" id="P44496"/>
<dbReference type="BioCyc" id="HINF71421:G1GJ1-71-MONOMER"/>
<dbReference type="Proteomes" id="UP000000579">
    <property type="component" value="Chromosome"/>
</dbReference>
<dbReference type="GO" id="GO:0043590">
    <property type="term" value="C:bacterial nucleoid"/>
    <property type="evidence" value="ECO:0000318"/>
    <property type="project" value="GO_Central"/>
</dbReference>
<dbReference type="GO" id="GO:0005524">
    <property type="term" value="F:ATP binding"/>
    <property type="evidence" value="ECO:0007669"/>
    <property type="project" value="UniProtKB-KW"/>
</dbReference>
<dbReference type="GO" id="GO:0016887">
    <property type="term" value="F:ATP hydrolysis activity"/>
    <property type="evidence" value="ECO:0007669"/>
    <property type="project" value="InterPro"/>
</dbReference>
<dbReference type="GO" id="GO:0006310">
    <property type="term" value="P:DNA recombination"/>
    <property type="evidence" value="ECO:0007669"/>
    <property type="project" value="InterPro"/>
</dbReference>
<dbReference type="GO" id="GO:0006302">
    <property type="term" value="P:double-strand break repair"/>
    <property type="evidence" value="ECO:0007669"/>
    <property type="project" value="InterPro"/>
</dbReference>
<dbReference type="GO" id="GO:0009432">
    <property type="term" value="P:SOS response"/>
    <property type="evidence" value="ECO:0000269"/>
    <property type="project" value="CollecTF"/>
</dbReference>
<dbReference type="CDD" id="cd03241">
    <property type="entry name" value="ABC_RecN"/>
    <property type="match status" value="2"/>
</dbReference>
<dbReference type="FunFam" id="3.40.50.300:FF:000319">
    <property type="entry name" value="DNA repair protein RecN"/>
    <property type="match status" value="1"/>
</dbReference>
<dbReference type="FunFam" id="3.40.50.300:FF:000356">
    <property type="entry name" value="DNA repair protein RecN"/>
    <property type="match status" value="1"/>
</dbReference>
<dbReference type="Gene3D" id="3.40.50.300">
    <property type="entry name" value="P-loop containing nucleotide triphosphate hydrolases"/>
    <property type="match status" value="2"/>
</dbReference>
<dbReference type="InterPro" id="IPR004604">
    <property type="entry name" value="DNA_recomb/repair_RecN"/>
</dbReference>
<dbReference type="InterPro" id="IPR027417">
    <property type="entry name" value="P-loop_NTPase"/>
</dbReference>
<dbReference type="InterPro" id="IPR038729">
    <property type="entry name" value="Rad50/SbcC_AAA"/>
</dbReference>
<dbReference type="NCBIfam" id="NF008121">
    <property type="entry name" value="PRK10869.1"/>
    <property type="match status" value="1"/>
</dbReference>
<dbReference type="NCBIfam" id="TIGR00634">
    <property type="entry name" value="recN"/>
    <property type="match status" value="1"/>
</dbReference>
<dbReference type="PANTHER" id="PTHR11059">
    <property type="entry name" value="DNA REPAIR PROTEIN RECN"/>
    <property type="match status" value="1"/>
</dbReference>
<dbReference type="PANTHER" id="PTHR11059:SF0">
    <property type="entry name" value="DNA REPAIR PROTEIN RECN"/>
    <property type="match status" value="1"/>
</dbReference>
<dbReference type="Pfam" id="PF13476">
    <property type="entry name" value="AAA_23"/>
    <property type="match status" value="1"/>
</dbReference>
<dbReference type="PIRSF" id="PIRSF003128">
    <property type="entry name" value="RecN"/>
    <property type="match status" value="1"/>
</dbReference>
<dbReference type="SUPFAM" id="SSF52540">
    <property type="entry name" value="P-loop containing nucleoside triphosphate hydrolases"/>
    <property type="match status" value="2"/>
</dbReference>
<accession>P44496</accession>
<evidence type="ECO:0000250" key="1"/>
<evidence type="ECO:0000255" key="2"/>
<evidence type="ECO:0000305" key="3"/>
<organism>
    <name type="scientific">Haemophilus influenzae (strain ATCC 51907 / DSM 11121 / KW20 / Rd)</name>
    <dbReference type="NCBI Taxonomy" id="71421"/>
    <lineage>
        <taxon>Bacteria</taxon>
        <taxon>Pseudomonadati</taxon>
        <taxon>Pseudomonadota</taxon>
        <taxon>Gammaproteobacteria</taxon>
        <taxon>Pasteurellales</taxon>
        <taxon>Pasteurellaceae</taxon>
        <taxon>Haemophilus</taxon>
    </lineage>
</organism>
<name>RECN_HAEIN</name>
<proteinExistence type="inferred from homology"/>
<comment type="function">
    <text evidence="1">May be involved in recombinational repair of damaged DNA.</text>
</comment>
<comment type="similarity">
    <text evidence="3">Belongs to the RecN family.</text>
</comment>
<protein>
    <recommendedName>
        <fullName>DNA repair protein RecN</fullName>
    </recommendedName>
    <alternativeName>
        <fullName>Recombination protein N</fullName>
    </alternativeName>
</protein>
<gene>
    <name type="primary">recN</name>
    <name type="ordered locus">HI_0070</name>
</gene>
<sequence>MLTQLTINNFAIVRQLDIELAKGMSVITGETGAGKSIAIDALGLCFGQRVETSMVREGQERAEICATFQLESQNPAYHWLSEQELQDPDNPTECILRRIINADGRSKAFINSTPVSASQLKEIAQYLVHINGQHASQLLLKNDYQLQLVDNFAAHPELLVKMREDYQTWKNLQNQVKTFQQKVAENEARKQLLQYQVDELDEFNLRPNEYLELEDEQRRLSSSEQLTQLSQSALQILSENDTVNIDSLLYRATQYIDELAELDPQYAEVQNMLNDALIQVQEATSEVQNLSSNIEQDPQLLQEIEQRISQTLQLARKHQVKPEDLVEQHKKLKAELTALLDFSESEEMLIEQEKRAFEQMQATATALTASRQQSATRLAQNVTQSIKQLAMENAEFYVELNTDLDKVSANGADNVIFTLRSNLGQQPQPLAKIASGGELSRISLAIQVLTSDQSAIPTLIFDEVDVGISGKTASVVGKLLRQLSERCQVLCVTHLPQVACHGHHQFNVEKFTVDNKTETKMTALSQAERVPALARLLGGSEITELALANAQEMLDLVH</sequence>
<reference key="1">
    <citation type="journal article" date="1995" name="Science">
        <title>Whole-genome random sequencing and assembly of Haemophilus influenzae Rd.</title>
        <authorList>
            <person name="Fleischmann R.D."/>
            <person name="Adams M.D."/>
            <person name="White O."/>
            <person name="Clayton R.A."/>
            <person name="Kirkness E.F."/>
            <person name="Kerlavage A.R."/>
            <person name="Bult C.J."/>
            <person name="Tomb J.-F."/>
            <person name="Dougherty B.A."/>
            <person name="Merrick J.M."/>
            <person name="McKenney K."/>
            <person name="Sutton G.G."/>
            <person name="FitzHugh W."/>
            <person name="Fields C.A."/>
            <person name="Gocayne J.D."/>
            <person name="Scott J.D."/>
            <person name="Shirley R."/>
            <person name="Liu L.-I."/>
            <person name="Glodek A."/>
            <person name="Kelley J.M."/>
            <person name="Weidman J.F."/>
            <person name="Phillips C.A."/>
            <person name="Spriggs T."/>
            <person name="Hedblom E."/>
            <person name="Cotton M.D."/>
            <person name="Utterback T.R."/>
            <person name="Hanna M.C."/>
            <person name="Nguyen D.T."/>
            <person name="Saudek D.M."/>
            <person name="Brandon R.C."/>
            <person name="Fine L.D."/>
            <person name="Fritchman J.L."/>
            <person name="Fuhrmann J.L."/>
            <person name="Geoghagen N.S.M."/>
            <person name="Gnehm C.L."/>
            <person name="McDonald L.A."/>
            <person name="Small K.V."/>
            <person name="Fraser C.M."/>
            <person name="Smith H.O."/>
            <person name="Venter J.C."/>
        </authorList>
    </citation>
    <scope>NUCLEOTIDE SEQUENCE [LARGE SCALE GENOMIC DNA]</scope>
    <source>
        <strain>ATCC 51907 / DSM 11121 / KW20 / Rd</strain>
    </source>
</reference>
<keyword id="KW-0067">ATP-binding</keyword>
<keyword id="KW-0227">DNA damage</keyword>
<keyword id="KW-0234">DNA repair</keyword>
<keyword id="KW-0547">Nucleotide-binding</keyword>
<keyword id="KW-1185">Reference proteome</keyword>
<feature type="chain" id="PRO_0000188018" description="DNA repair protein RecN">
    <location>
        <begin position="1"/>
        <end position="558"/>
    </location>
</feature>
<feature type="binding site" evidence="2">
    <location>
        <begin position="29"/>
        <end position="36"/>
    </location>
    <ligand>
        <name>ATP</name>
        <dbReference type="ChEBI" id="CHEBI:30616"/>
    </ligand>
</feature>